<proteinExistence type="inferred from homology"/>
<keyword id="KW-0574">Periplasm</keyword>
<keyword id="KW-1185">Reference proteome</keyword>
<keyword id="KW-0732">Signal</keyword>
<keyword id="KW-0813">Transport</keyword>
<name>GSIB_ECO57</name>
<evidence type="ECO:0000250" key="1">
    <source>
        <dbReference type="UniProtKB" id="P75797"/>
    </source>
</evidence>
<evidence type="ECO:0000255" key="2"/>
<evidence type="ECO:0000305" key="3"/>
<feature type="signal peptide" evidence="2">
    <location>
        <begin position="1"/>
        <end position="26"/>
    </location>
</feature>
<feature type="chain" id="PRO_0000279974" description="Glutathione-binding protein GsiB">
    <location>
        <begin position="27"/>
        <end position="512"/>
    </location>
</feature>
<protein>
    <recommendedName>
        <fullName evidence="1">Glutathione-binding protein GsiB</fullName>
    </recommendedName>
</protein>
<organism>
    <name type="scientific">Escherichia coli O157:H7</name>
    <dbReference type="NCBI Taxonomy" id="83334"/>
    <lineage>
        <taxon>Bacteria</taxon>
        <taxon>Pseudomonadati</taxon>
        <taxon>Pseudomonadota</taxon>
        <taxon>Gammaproteobacteria</taxon>
        <taxon>Enterobacterales</taxon>
        <taxon>Enterobacteriaceae</taxon>
        <taxon>Escherichia</taxon>
    </lineage>
</organism>
<dbReference type="EMBL" id="AE005174">
    <property type="protein sequence ID" value="AAG55204.1"/>
    <property type="molecule type" value="Genomic_DNA"/>
</dbReference>
<dbReference type="EMBL" id="BA000007">
    <property type="protein sequence ID" value="BAB34332.1"/>
    <property type="molecule type" value="Genomic_DNA"/>
</dbReference>
<dbReference type="PIR" id="E90742">
    <property type="entry name" value="E90742"/>
</dbReference>
<dbReference type="PIR" id="H85592">
    <property type="entry name" value="H85592"/>
</dbReference>
<dbReference type="RefSeq" id="NP_308936.1">
    <property type="nucleotide sequence ID" value="NC_002695.1"/>
</dbReference>
<dbReference type="RefSeq" id="WP_000090133.1">
    <property type="nucleotide sequence ID" value="NZ_VOAI01000006.1"/>
</dbReference>
<dbReference type="SMR" id="Q8X6V9"/>
<dbReference type="STRING" id="155864.Z1054"/>
<dbReference type="GeneID" id="917655"/>
<dbReference type="KEGG" id="ece:Z1054"/>
<dbReference type="KEGG" id="ecs:ECs_0909"/>
<dbReference type="PATRIC" id="fig|386585.9.peg.1024"/>
<dbReference type="eggNOG" id="COG0747">
    <property type="taxonomic scope" value="Bacteria"/>
</dbReference>
<dbReference type="HOGENOM" id="CLU_017028_7_3_6"/>
<dbReference type="OMA" id="WKESPWV"/>
<dbReference type="Proteomes" id="UP000000558">
    <property type="component" value="Chromosome"/>
</dbReference>
<dbReference type="Proteomes" id="UP000002519">
    <property type="component" value="Chromosome"/>
</dbReference>
<dbReference type="GO" id="GO:0043190">
    <property type="term" value="C:ATP-binding cassette (ABC) transporter complex"/>
    <property type="evidence" value="ECO:0007669"/>
    <property type="project" value="InterPro"/>
</dbReference>
<dbReference type="GO" id="GO:0030288">
    <property type="term" value="C:outer membrane-bounded periplasmic space"/>
    <property type="evidence" value="ECO:0007669"/>
    <property type="project" value="TreeGrafter"/>
</dbReference>
<dbReference type="GO" id="GO:1904680">
    <property type="term" value="F:peptide transmembrane transporter activity"/>
    <property type="evidence" value="ECO:0007669"/>
    <property type="project" value="TreeGrafter"/>
</dbReference>
<dbReference type="GO" id="GO:0042938">
    <property type="term" value="P:dipeptide transport"/>
    <property type="evidence" value="ECO:0007669"/>
    <property type="project" value="TreeGrafter"/>
</dbReference>
<dbReference type="CDD" id="cd08499">
    <property type="entry name" value="PBP2_Ylib_like"/>
    <property type="match status" value="1"/>
</dbReference>
<dbReference type="FunFam" id="3.10.105.10:FF:000003">
    <property type="entry name" value="Glutathione ABC transporter substrate-binding protein GsiB"/>
    <property type="match status" value="1"/>
</dbReference>
<dbReference type="FunFam" id="3.40.190.10:FF:000094">
    <property type="entry name" value="Glutathione ABC transporter substrate-binding protein GsiB"/>
    <property type="match status" value="1"/>
</dbReference>
<dbReference type="FunFam" id="3.90.76.10:FF:000003">
    <property type="entry name" value="Glutathione ABC transporter substrate-binding protein GsiB"/>
    <property type="match status" value="1"/>
</dbReference>
<dbReference type="Gene3D" id="3.90.76.10">
    <property type="entry name" value="Dipeptide-binding Protein, Domain 1"/>
    <property type="match status" value="1"/>
</dbReference>
<dbReference type="Gene3D" id="3.10.105.10">
    <property type="entry name" value="Dipeptide-binding Protein, Domain 3"/>
    <property type="match status" value="1"/>
</dbReference>
<dbReference type="Gene3D" id="3.40.190.10">
    <property type="entry name" value="Periplasmic binding protein-like II"/>
    <property type="match status" value="1"/>
</dbReference>
<dbReference type="InterPro" id="IPR030678">
    <property type="entry name" value="Peptide/Ni-bd"/>
</dbReference>
<dbReference type="InterPro" id="IPR039424">
    <property type="entry name" value="SBP_5"/>
</dbReference>
<dbReference type="InterPro" id="IPR023765">
    <property type="entry name" value="SBP_5_CS"/>
</dbReference>
<dbReference type="InterPro" id="IPR000914">
    <property type="entry name" value="SBP_5_dom"/>
</dbReference>
<dbReference type="NCBIfam" id="NF011942">
    <property type="entry name" value="PRK15413.1"/>
    <property type="match status" value="1"/>
</dbReference>
<dbReference type="PANTHER" id="PTHR30290:SF32">
    <property type="entry name" value="GLUTATHIONE-BINDING PROTEIN GSIB"/>
    <property type="match status" value="1"/>
</dbReference>
<dbReference type="PANTHER" id="PTHR30290">
    <property type="entry name" value="PERIPLASMIC BINDING COMPONENT OF ABC TRANSPORTER"/>
    <property type="match status" value="1"/>
</dbReference>
<dbReference type="Pfam" id="PF00496">
    <property type="entry name" value="SBP_bac_5"/>
    <property type="match status" value="1"/>
</dbReference>
<dbReference type="PIRSF" id="PIRSF002741">
    <property type="entry name" value="MppA"/>
    <property type="match status" value="1"/>
</dbReference>
<dbReference type="SUPFAM" id="SSF53850">
    <property type="entry name" value="Periplasmic binding protein-like II"/>
    <property type="match status" value="1"/>
</dbReference>
<dbReference type="PROSITE" id="PS01040">
    <property type="entry name" value="SBP_BACTERIAL_5"/>
    <property type="match status" value="1"/>
</dbReference>
<reference key="1">
    <citation type="journal article" date="2001" name="Nature">
        <title>Genome sequence of enterohaemorrhagic Escherichia coli O157:H7.</title>
        <authorList>
            <person name="Perna N.T."/>
            <person name="Plunkett G. III"/>
            <person name="Burland V."/>
            <person name="Mau B."/>
            <person name="Glasner J.D."/>
            <person name="Rose D.J."/>
            <person name="Mayhew G.F."/>
            <person name="Evans P.S."/>
            <person name="Gregor J."/>
            <person name="Kirkpatrick H.A."/>
            <person name="Posfai G."/>
            <person name="Hackett J."/>
            <person name="Klink S."/>
            <person name="Boutin A."/>
            <person name="Shao Y."/>
            <person name="Miller L."/>
            <person name="Grotbeck E.J."/>
            <person name="Davis N.W."/>
            <person name="Lim A."/>
            <person name="Dimalanta E.T."/>
            <person name="Potamousis K."/>
            <person name="Apodaca J."/>
            <person name="Anantharaman T.S."/>
            <person name="Lin J."/>
            <person name="Yen G."/>
            <person name="Schwartz D.C."/>
            <person name="Welch R.A."/>
            <person name="Blattner F.R."/>
        </authorList>
    </citation>
    <scope>NUCLEOTIDE SEQUENCE [LARGE SCALE GENOMIC DNA]</scope>
    <source>
        <strain>O157:H7 / EDL933 / ATCC 700927 / EHEC</strain>
    </source>
</reference>
<reference key="2">
    <citation type="journal article" date="2001" name="DNA Res.">
        <title>Complete genome sequence of enterohemorrhagic Escherichia coli O157:H7 and genomic comparison with a laboratory strain K-12.</title>
        <authorList>
            <person name="Hayashi T."/>
            <person name="Makino K."/>
            <person name="Ohnishi M."/>
            <person name="Kurokawa K."/>
            <person name="Ishii K."/>
            <person name="Yokoyama K."/>
            <person name="Han C.-G."/>
            <person name="Ohtsubo E."/>
            <person name="Nakayama K."/>
            <person name="Murata T."/>
            <person name="Tanaka M."/>
            <person name="Tobe T."/>
            <person name="Iida T."/>
            <person name="Takami H."/>
            <person name="Honda T."/>
            <person name="Sasakawa C."/>
            <person name="Ogasawara N."/>
            <person name="Yasunaga T."/>
            <person name="Kuhara S."/>
            <person name="Shiba T."/>
            <person name="Hattori M."/>
            <person name="Shinagawa H."/>
        </authorList>
    </citation>
    <scope>NUCLEOTIDE SEQUENCE [LARGE SCALE GENOMIC DNA]</scope>
    <source>
        <strain>O157:H7 / Sakai / RIMD 0509952 / EHEC</strain>
    </source>
</reference>
<accession>Q8X6V9</accession>
<accession>Q7AGA5</accession>
<sequence length="512" mass="56414">MARAVHRSGLVALGIATALMASCAFAAKDVVVAVGSNFTTLDPYDANDTLSQAVAKSFYQGLFGLDKEMKLKNVLAESYTVSDDGITYTVKLREGIKFQDGTDFNAAAVKANLDRASDPANHLKRYNLYKNIAKTEAIDPTTVKITLKQPFSAFINILAHPATAMISPAALEKYGKEIGFHPVGTGPYELDTWNQTDFVKVKKFAGYWQPGLPKLDSITWRPVADNNTRAAMLQTGEAQFAFPIPYEQAALLEKNKNIELMASPSIMQRYISMNVTQKPFDNPKVREALNYAINRPALVKVAFAGYATPATGVVPPSIAYAQSYKPWPYDPVKARELLKEAGYPNGFSTTLWSSHNHSTAQKVLQFTQQQLAQVGIKAQVTAMDAGQRAAEVEGKGQKESGVRMFYTGWSASTGEADWALSPLFASQNWPPTLFNTAFYSNKQVDDFLAQALKTNDPAEKTRLYKAAQDIIWQESPWIPLVVEKLVSAHSKNLTGFWIMPDTGFSFEDADLQ</sequence>
<comment type="function">
    <text evidence="1">Part of the ABC transporter complex GsiABCD involved in glutathione import. Binds glutathione.</text>
</comment>
<comment type="subunit">
    <text evidence="1">The complex is composed of two ATP-binding proteins (GsiA), two transmembrane proteins (GsiC and GsiD) and a solute-binding protein (GsiB).</text>
</comment>
<comment type="subcellular location">
    <subcellularLocation>
        <location evidence="1">Periplasm</location>
    </subcellularLocation>
</comment>
<comment type="similarity">
    <text evidence="3">Belongs to the bacterial solute-binding protein 5 family.</text>
</comment>
<gene>
    <name evidence="1" type="primary">gsiB</name>
    <name type="ordered locus">Z1054</name>
    <name type="ordered locus">ECs0909</name>
</gene>